<organism>
    <name type="scientific">Hahella chejuensis (strain KCTC 2396)</name>
    <dbReference type="NCBI Taxonomy" id="349521"/>
    <lineage>
        <taxon>Bacteria</taxon>
        <taxon>Pseudomonadati</taxon>
        <taxon>Pseudomonadota</taxon>
        <taxon>Gammaproteobacteria</taxon>
        <taxon>Oceanospirillales</taxon>
        <taxon>Hahellaceae</taxon>
        <taxon>Hahella</taxon>
    </lineage>
</organism>
<proteinExistence type="inferred from homology"/>
<evidence type="ECO:0000255" key="1">
    <source>
        <dbReference type="HAMAP-Rule" id="MF_00141"/>
    </source>
</evidence>
<comment type="function">
    <text evidence="1">Involved in peptide bond synthesis. Alleviates ribosome stalling that occurs when 3 or more consecutive Pro residues or the sequence PPG is present in a protein, possibly by augmenting the peptidyl transferase activity of the ribosome. Modification of Lys-34 is required for alleviation.</text>
</comment>
<comment type="pathway">
    <text evidence="1">Protein biosynthesis; polypeptide chain elongation.</text>
</comment>
<comment type="subcellular location">
    <subcellularLocation>
        <location evidence="1">Cytoplasm</location>
    </subcellularLocation>
</comment>
<comment type="PTM">
    <text evidence="1">May be beta-lysylated on the epsilon-amino group of Lys-34 by the combined action of EpmA and EpmB, and then hydroxylated on the C5 position of the same residue by EpmC (if this protein is present). Lysylation is critical for the stimulatory effect of EF-P on peptide-bond formation. The lysylation moiety may extend toward the peptidyltransferase center and stabilize the terminal 3-CCA end of the tRNA. Hydroxylation of the C5 position on Lys-34 may allow additional potential stabilizing hydrogen-bond interactions with the P-tRNA.</text>
</comment>
<comment type="similarity">
    <text evidence="1">Belongs to the elongation factor P family.</text>
</comment>
<name>EFP_HAHCH</name>
<reference key="1">
    <citation type="journal article" date="2005" name="Nucleic Acids Res.">
        <title>Genomic blueprint of Hahella chejuensis, a marine microbe producing an algicidal agent.</title>
        <authorList>
            <person name="Jeong H."/>
            <person name="Yim J.H."/>
            <person name="Lee C."/>
            <person name="Choi S.-H."/>
            <person name="Park Y.K."/>
            <person name="Yoon S.H."/>
            <person name="Hur C.-G."/>
            <person name="Kang H.-Y."/>
            <person name="Kim D."/>
            <person name="Lee H.H."/>
            <person name="Park K.H."/>
            <person name="Park S.-H."/>
            <person name="Park H.-S."/>
            <person name="Lee H.K."/>
            <person name="Oh T.K."/>
            <person name="Kim J.F."/>
        </authorList>
    </citation>
    <scope>NUCLEOTIDE SEQUENCE [LARGE SCALE GENOMIC DNA]</scope>
    <source>
        <strain>KCTC 2396</strain>
    </source>
</reference>
<gene>
    <name evidence="1" type="primary">efp</name>
    <name type="ordered locus">HCH_05399</name>
</gene>
<sequence>MANYSTNEFKSGLKIMLDGDPCSIIENEFVKPGKGQAFNRVKFRNLKSGRVGERTFKSGDSVEGADVVDLDMEYLYTDGEFYHFMLTDGSFEQHAADVSAVGDTTKWLKEQDVYTVTLYNGAPLSVSPPNFVELEIVETDPGVRGDTAQGGSKPAKLTTGAVVAVPLFINQGEMIKVDTRSGEYVSRVKS</sequence>
<protein>
    <recommendedName>
        <fullName evidence="1">Elongation factor P</fullName>
        <shortName evidence="1">EF-P</shortName>
    </recommendedName>
</protein>
<keyword id="KW-0963">Cytoplasm</keyword>
<keyword id="KW-0251">Elongation factor</keyword>
<keyword id="KW-0379">Hydroxylation</keyword>
<keyword id="KW-0648">Protein biosynthesis</keyword>
<keyword id="KW-1185">Reference proteome</keyword>
<dbReference type="EMBL" id="CP000155">
    <property type="protein sequence ID" value="ABC32068.1"/>
    <property type="molecule type" value="Genomic_DNA"/>
</dbReference>
<dbReference type="RefSeq" id="WP_011399132.1">
    <property type="nucleotide sequence ID" value="NC_007645.1"/>
</dbReference>
<dbReference type="SMR" id="Q2SBA6"/>
<dbReference type="STRING" id="349521.HCH_05399"/>
<dbReference type="KEGG" id="hch:HCH_05399"/>
<dbReference type="eggNOG" id="COG0231">
    <property type="taxonomic scope" value="Bacteria"/>
</dbReference>
<dbReference type="HOGENOM" id="CLU_074944_0_0_6"/>
<dbReference type="OrthoDB" id="9801844at2"/>
<dbReference type="UniPathway" id="UPA00345"/>
<dbReference type="Proteomes" id="UP000000238">
    <property type="component" value="Chromosome"/>
</dbReference>
<dbReference type="GO" id="GO:0005737">
    <property type="term" value="C:cytoplasm"/>
    <property type="evidence" value="ECO:0007669"/>
    <property type="project" value="UniProtKB-SubCell"/>
</dbReference>
<dbReference type="GO" id="GO:0003746">
    <property type="term" value="F:translation elongation factor activity"/>
    <property type="evidence" value="ECO:0007669"/>
    <property type="project" value="UniProtKB-UniRule"/>
</dbReference>
<dbReference type="GO" id="GO:0043043">
    <property type="term" value="P:peptide biosynthetic process"/>
    <property type="evidence" value="ECO:0007669"/>
    <property type="project" value="InterPro"/>
</dbReference>
<dbReference type="CDD" id="cd04470">
    <property type="entry name" value="S1_EF-P_repeat_1"/>
    <property type="match status" value="1"/>
</dbReference>
<dbReference type="CDD" id="cd05794">
    <property type="entry name" value="S1_EF-P_repeat_2"/>
    <property type="match status" value="1"/>
</dbReference>
<dbReference type="FunFam" id="2.30.30.30:FF:000003">
    <property type="entry name" value="Elongation factor P"/>
    <property type="match status" value="1"/>
</dbReference>
<dbReference type="FunFam" id="2.40.50.140:FF:000004">
    <property type="entry name" value="Elongation factor P"/>
    <property type="match status" value="1"/>
</dbReference>
<dbReference type="FunFam" id="2.40.50.140:FF:000009">
    <property type="entry name" value="Elongation factor P"/>
    <property type="match status" value="1"/>
</dbReference>
<dbReference type="Gene3D" id="2.30.30.30">
    <property type="match status" value="1"/>
</dbReference>
<dbReference type="Gene3D" id="2.40.50.140">
    <property type="entry name" value="Nucleic acid-binding proteins"/>
    <property type="match status" value="2"/>
</dbReference>
<dbReference type="HAMAP" id="MF_00141">
    <property type="entry name" value="EF_P"/>
    <property type="match status" value="1"/>
</dbReference>
<dbReference type="InterPro" id="IPR015365">
    <property type="entry name" value="Elong-fact-P_C"/>
</dbReference>
<dbReference type="InterPro" id="IPR012340">
    <property type="entry name" value="NA-bd_OB-fold"/>
</dbReference>
<dbReference type="InterPro" id="IPR014722">
    <property type="entry name" value="Rib_uL2_dom2"/>
</dbReference>
<dbReference type="InterPro" id="IPR020599">
    <property type="entry name" value="Transl_elong_fac_P/YeiP"/>
</dbReference>
<dbReference type="InterPro" id="IPR013185">
    <property type="entry name" value="Transl_elong_KOW-like"/>
</dbReference>
<dbReference type="InterPro" id="IPR001059">
    <property type="entry name" value="Transl_elong_P/YeiP_cen"/>
</dbReference>
<dbReference type="InterPro" id="IPR013852">
    <property type="entry name" value="Transl_elong_P/YeiP_CS"/>
</dbReference>
<dbReference type="InterPro" id="IPR011768">
    <property type="entry name" value="Transl_elongation_fac_P"/>
</dbReference>
<dbReference type="InterPro" id="IPR008991">
    <property type="entry name" value="Translation_prot_SH3-like_sf"/>
</dbReference>
<dbReference type="NCBIfam" id="TIGR00038">
    <property type="entry name" value="efp"/>
    <property type="match status" value="1"/>
</dbReference>
<dbReference type="NCBIfam" id="NF001810">
    <property type="entry name" value="PRK00529.1"/>
    <property type="match status" value="1"/>
</dbReference>
<dbReference type="PANTHER" id="PTHR30053">
    <property type="entry name" value="ELONGATION FACTOR P"/>
    <property type="match status" value="1"/>
</dbReference>
<dbReference type="PANTHER" id="PTHR30053:SF12">
    <property type="entry name" value="ELONGATION FACTOR P (EF-P) FAMILY PROTEIN"/>
    <property type="match status" value="1"/>
</dbReference>
<dbReference type="Pfam" id="PF01132">
    <property type="entry name" value="EFP"/>
    <property type="match status" value="1"/>
</dbReference>
<dbReference type="Pfam" id="PF08207">
    <property type="entry name" value="EFP_N"/>
    <property type="match status" value="1"/>
</dbReference>
<dbReference type="Pfam" id="PF09285">
    <property type="entry name" value="Elong-fact-P_C"/>
    <property type="match status" value="1"/>
</dbReference>
<dbReference type="PIRSF" id="PIRSF005901">
    <property type="entry name" value="EF-P"/>
    <property type="match status" value="1"/>
</dbReference>
<dbReference type="SMART" id="SM01185">
    <property type="entry name" value="EFP"/>
    <property type="match status" value="1"/>
</dbReference>
<dbReference type="SMART" id="SM00841">
    <property type="entry name" value="Elong-fact-P_C"/>
    <property type="match status" value="1"/>
</dbReference>
<dbReference type="SUPFAM" id="SSF50249">
    <property type="entry name" value="Nucleic acid-binding proteins"/>
    <property type="match status" value="2"/>
</dbReference>
<dbReference type="SUPFAM" id="SSF50104">
    <property type="entry name" value="Translation proteins SH3-like domain"/>
    <property type="match status" value="1"/>
</dbReference>
<dbReference type="PROSITE" id="PS01275">
    <property type="entry name" value="EFP"/>
    <property type="match status" value="1"/>
</dbReference>
<accession>Q2SBA6</accession>
<feature type="chain" id="PRO_1000010758" description="Elongation factor P">
    <location>
        <begin position="1"/>
        <end position="190"/>
    </location>
</feature>
<feature type="modified residue" description="N6-(3,6-diaminohexanoyl)-5-hydroxylysine" evidence="1">
    <location>
        <position position="34"/>
    </location>
</feature>